<feature type="chain" id="PRO_0000198449" description="Ribonuclease P protein component">
    <location>
        <begin position="1"/>
        <end position="121"/>
    </location>
</feature>
<proteinExistence type="inferred from homology"/>
<keyword id="KW-0255">Endonuclease</keyword>
<keyword id="KW-0378">Hydrolase</keyword>
<keyword id="KW-0540">Nuclease</keyword>
<keyword id="KW-1185">Reference proteome</keyword>
<keyword id="KW-0694">RNA-binding</keyword>
<keyword id="KW-0819">tRNA processing</keyword>
<organism>
    <name type="scientific">Chromobacterium violaceum (strain ATCC 12472 / DSM 30191 / JCM 1249 / CCUG 213 / NBRC 12614 / NCIMB 9131 / NCTC 9757 / MK)</name>
    <dbReference type="NCBI Taxonomy" id="243365"/>
    <lineage>
        <taxon>Bacteria</taxon>
        <taxon>Pseudomonadati</taxon>
        <taxon>Pseudomonadota</taxon>
        <taxon>Betaproteobacteria</taxon>
        <taxon>Neisseriales</taxon>
        <taxon>Chromobacteriaceae</taxon>
        <taxon>Chromobacterium</taxon>
    </lineage>
</organism>
<protein>
    <recommendedName>
        <fullName evidence="1">Ribonuclease P protein component</fullName>
        <shortName evidence="1">RNase P protein</shortName>
        <shortName evidence="1">RNaseP protein</shortName>
        <ecNumber evidence="1">3.1.26.5</ecNumber>
    </recommendedName>
    <alternativeName>
        <fullName evidence="1">Protein C5</fullName>
    </alternativeName>
</protein>
<gene>
    <name evidence="1" type="primary">rnpA</name>
    <name type="ordered locus">CV_4406</name>
</gene>
<comment type="function">
    <text evidence="1">RNaseP catalyzes the removal of the 5'-leader sequence from pre-tRNA to produce the mature 5'-terminus. It can also cleave other RNA substrates such as 4.5S RNA. The protein component plays an auxiliary but essential role in vivo by binding to the 5'-leader sequence and broadening the substrate specificity of the ribozyme.</text>
</comment>
<comment type="catalytic activity">
    <reaction evidence="1">
        <text>Endonucleolytic cleavage of RNA, removing 5'-extranucleotides from tRNA precursor.</text>
        <dbReference type="EC" id="3.1.26.5"/>
    </reaction>
</comment>
<comment type="subunit">
    <text evidence="1">Consists of a catalytic RNA component (M1 or rnpB) and a protein subunit.</text>
</comment>
<comment type="similarity">
    <text evidence="1">Belongs to the RnpA family.</text>
</comment>
<sequence length="121" mass="13967">MSAYRFRRAHRLLKTDEFSSVFSLRQQRSNAFFQVFARPNGLDHARVGLVVGKKVAKRAVRRNYIKRCVREWFRLNQQGLDGVDYVVRAKTAFTREQRAEAVTALQALFAKLARCRASSSS</sequence>
<dbReference type="EC" id="3.1.26.5" evidence="1"/>
<dbReference type="EMBL" id="AE016825">
    <property type="protein sequence ID" value="AAQ62065.1"/>
    <property type="molecule type" value="Genomic_DNA"/>
</dbReference>
<dbReference type="RefSeq" id="WP_011137952.1">
    <property type="nucleotide sequence ID" value="NC_005085.1"/>
</dbReference>
<dbReference type="SMR" id="Q7NPT6"/>
<dbReference type="STRING" id="243365.CV_4406"/>
<dbReference type="GeneID" id="97477146"/>
<dbReference type="KEGG" id="cvi:CV_4406"/>
<dbReference type="eggNOG" id="COG0594">
    <property type="taxonomic scope" value="Bacteria"/>
</dbReference>
<dbReference type="HOGENOM" id="CLU_117179_11_2_4"/>
<dbReference type="OrthoDB" id="398329at2"/>
<dbReference type="Proteomes" id="UP000001424">
    <property type="component" value="Chromosome"/>
</dbReference>
<dbReference type="GO" id="GO:0030677">
    <property type="term" value="C:ribonuclease P complex"/>
    <property type="evidence" value="ECO:0007669"/>
    <property type="project" value="TreeGrafter"/>
</dbReference>
<dbReference type="GO" id="GO:0042781">
    <property type="term" value="F:3'-tRNA processing endoribonuclease activity"/>
    <property type="evidence" value="ECO:0007669"/>
    <property type="project" value="TreeGrafter"/>
</dbReference>
<dbReference type="GO" id="GO:0004526">
    <property type="term" value="F:ribonuclease P activity"/>
    <property type="evidence" value="ECO:0007669"/>
    <property type="project" value="UniProtKB-UniRule"/>
</dbReference>
<dbReference type="GO" id="GO:0000049">
    <property type="term" value="F:tRNA binding"/>
    <property type="evidence" value="ECO:0007669"/>
    <property type="project" value="UniProtKB-UniRule"/>
</dbReference>
<dbReference type="GO" id="GO:0001682">
    <property type="term" value="P:tRNA 5'-leader removal"/>
    <property type="evidence" value="ECO:0007669"/>
    <property type="project" value="UniProtKB-UniRule"/>
</dbReference>
<dbReference type="Gene3D" id="3.30.230.10">
    <property type="match status" value="1"/>
</dbReference>
<dbReference type="HAMAP" id="MF_00227">
    <property type="entry name" value="RNase_P"/>
    <property type="match status" value="1"/>
</dbReference>
<dbReference type="InterPro" id="IPR020568">
    <property type="entry name" value="Ribosomal_Su5_D2-typ_SF"/>
</dbReference>
<dbReference type="InterPro" id="IPR014721">
    <property type="entry name" value="Ribsml_uS5_D2-typ_fold_subgr"/>
</dbReference>
<dbReference type="InterPro" id="IPR000100">
    <property type="entry name" value="RNase_P"/>
</dbReference>
<dbReference type="InterPro" id="IPR020539">
    <property type="entry name" value="RNase_P_CS"/>
</dbReference>
<dbReference type="NCBIfam" id="TIGR00188">
    <property type="entry name" value="rnpA"/>
    <property type="match status" value="1"/>
</dbReference>
<dbReference type="PANTHER" id="PTHR33992">
    <property type="entry name" value="RIBONUCLEASE P PROTEIN COMPONENT"/>
    <property type="match status" value="1"/>
</dbReference>
<dbReference type="PANTHER" id="PTHR33992:SF1">
    <property type="entry name" value="RIBONUCLEASE P PROTEIN COMPONENT"/>
    <property type="match status" value="1"/>
</dbReference>
<dbReference type="Pfam" id="PF00825">
    <property type="entry name" value="Ribonuclease_P"/>
    <property type="match status" value="1"/>
</dbReference>
<dbReference type="SUPFAM" id="SSF54211">
    <property type="entry name" value="Ribosomal protein S5 domain 2-like"/>
    <property type="match status" value="1"/>
</dbReference>
<dbReference type="PROSITE" id="PS00648">
    <property type="entry name" value="RIBONUCLEASE_P"/>
    <property type="match status" value="1"/>
</dbReference>
<evidence type="ECO:0000255" key="1">
    <source>
        <dbReference type="HAMAP-Rule" id="MF_00227"/>
    </source>
</evidence>
<accession>Q7NPT6</accession>
<reference key="1">
    <citation type="journal article" date="2003" name="Proc. Natl. Acad. Sci. U.S.A.">
        <title>The complete genome sequence of Chromobacterium violaceum reveals remarkable and exploitable bacterial adaptability.</title>
        <authorList>
            <person name="Vasconcelos A.T.R."/>
            <person name="de Almeida D.F."/>
            <person name="Hungria M."/>
            <person name="Guimaraes C.T."/>
            <person name="Antonio R.V."/>
            <person name="Almeida F.C."/>
            <person name="de Almeida L.G.P."/>
            <person name="de Almeida R."/>
            <person name="Alves-Gomes J.A."/>
            <person name="Andrade E.M."/>
            <person name="Araripe J."/>
            <person name="de Araujo M.F.F."/>
            <person name="Astolfi-Filho S."/>
            <person name="Azevedo V."/>
            <person name="Baptista A.J."/>
            <person name="Bataus L.A.M."/>
            <person name="Batista J.S."/>
            <person name="Belo A."/>
            <person name="van den Berg C."/>
            <person name="Bogo M."/>
            <person name="Bonatto S."/>
            <person name="Bordignon J."/>
            <person name="Brigido M.M."/>
            <person name="Brito C.A."/>
            <person name="Brocchi M."/>
            <person name="Burity H.A."/>
            <person name="Camargo A.A."/>
            <person name="Cardoso D.D.P."/>
            <person name="Carneiro N.P."/>
            <person name="Carraro D.M."/>
            <person name="Carvalho C.M.B."/>
            <person name="Cascardo J.C.M."/>
            <person name="Cavada B.S."/>
            <person name="Chueire L.M.O."/>
            <person name="Creczynski-Pasa T.B."/>
            <person name="Cunha-Junior N.C."/>
            <person name="Fagundes N."/>
            <person name="Falcao C.L."/>
            <person name="Fantinatti F."/>
            <person name="Farias I.P."/>
            <person name="Felipe M.S.S."/>
            <person name="Ferrari L.P."/>
            <person name="Ferro J.A."/>
            <person name="Ferro M.I.T."/>
            <person name="Franco G.R."/>
            <person name="Freitas N.S.A."/>
            <person name="Furlan L.R."/>
            <person name="Gazzinelli R.T."/>
            <person name="Gomes E.A."/>
            <person name="Goncalves P.R."/>
            <person name="Grangeiro T.B."/>
            <person name="Grattapaglia D."/>
            <person name="Grisard E.C."/>
            <person name="Hanna E.S."/>
            <person name="Jardim S.N."/>
            <person name="Laurino J."/>
            <person name="Leoi L.C.T."/>
            <person name="Lima L.F.A."/>
            <person name="Loureiro M.F."/>
            <person name="Lyra M.C.C.P."/>
            <person name="Madeira H.M.F."/>
            <person name="Manfio G.P."/>
            <person name="Maranhao A.Q."/>
            <person name="Martins W.S."/>
            <person name="di Mauro S.M.Z."/>
            <person name="de Medeiros S.R.B."/>
            <person name="Meissner R.V."/>
            <person name="Moreira M.A.M."/>
            <person name="Nascimento F.F."/>
            <person name="Nicolas M.F."/>
            <person name="Oliveira J.G."/>
            <person name="Oliveira S.C."/>
            <person name="Paixao R.F.C."/>
            <person name="Parente J.A."/>
            <person name="Pedrosa F.O."/>
            <person name="Pena S.D.J."/>
            <person name="Pereira J.O."/>
            <person name="Pereira M."/>
            <person name="Pinto L.S.R.C."/>
            <person name="Pinto L.S."/>
            <person name="Porto J.I.R."/>
            <person name="Potrich D.P."/>
            <person name="Ramalho-Neto C.E."/>
            <person name="Reis A.M.M."/>
            <person name="Rigo L.U."/>
            <person name="Rondinelli E."/>
            <person name="Santos E.B.P."/>
            <person name="Santos F.R."/>
            <person name="Schneider M.P.C."/>
            <person name="Seuanez H.N."/>
            <person name="Silva A.M.R."/>
            <person name="da Silva A.L.C."/>
            <person name="Silva D.W."/>
            <person name="Silva R."/>
            <person name="Simoes I.C."/>
            <person name="Simon D."/>
            <person name="Soares C.M.A."/>
            <person name="Soares R.B.A."/>
            <person name="Souza E.M."/>
            <person name="Souza K.R.L."/>
            <person name="Souza R.C."/>
            <person name="Steffens M.B.R."/>
            <person name="Steindel M."/>
            <person name="Teixeira S.R."/>
            <person name="Urmenyi T."/>
            <person name="Vettore A."/>
            <person name="Wassem R."/>
            <person name="Zaha A."/>
            <person name="Simpson A.J.G."/>
        </authorList>
    </citation>
    <scope>NUCLEOTIDE SEQUENCE [LARGE SCALE GENOMIC DNA]</scope>
    <source>
        <strain>ATCC 12472 / DSM 30191 / JCM 1249 / CCUG 213 / NBRC 12614 / NCIMB 9131 / NCTC 9757 / MK</strain>
    </source>
</reference>
<name>RNPA_CHRVO</name>